<dbReference type="EMBL" id="LT708304">
    <property type="protein sequence ID" value="SIT98440.1"/>
    <property type="molecule type" value="Genomic_DNA"/>
</dbReference>
<dbReference type="RefSeq" id="NP_853734.1">
    <property type="nucleotide sequence ID" value="NC_002945.3"/>
</dbReference>
<dbReference type="RefSeq" id="WP_010950333.1">
    <property type="nucleotide sequence ID" value="NC_002945.4"/>
</dbReference>
<dbReference type="SMR" id="Q7U2X8"/>
<dbReference type="KEGG" id="mbo:BQ2027_MB0065"/>
<dbReference type="PATRIC" id="fig|233413.5.peg.73"/>
<dbReference type="Proteomes" id="UP000001419">
    <property type="component" value="Chromosome"/>
</dbReference>
<dbReference type="GO" id="GO:0005576">
    <property type="term" value="C:extracellular region"/>
    <property type="evidence" value="ECO:0007669"/>
    <property type="project" value="TreeGrafter"/>
</dbReference>
<dbReference type="GO" id="GO:0005886">
    <property type="term" value="C:plasma membrane"/>
    <property type="evidence" value="ECO:0007669"/>
    <property type="project" value="UniProtKB-SubCell"/>
</dbReference>
<dbReference type="HAMAP" id="MF_01600">
    <property type="entry name" value="UPF0182"/>
    <property type="match status" value="1"/>
</dbReference>
<dbReference type="InterPro" id="IPR005372">
    <property type="entry name" value="UPF0182"/>
</dbReference>
<dbReference type="NCBIfam" id="NF000825">
    <property type="entry name" value="PRK00068.1"/>
    <property type="match status" value="1"/>
</dbReference>
<dbReference type="NCBIfam" id="NF009097">
    <property type="entry name" value="PRK12438.1"/>
    <property type="match status" value="1"/>
</dbReference>
<dbReference type="PANTHER" id="PTHR39344">
    <property type="entry name" value="UPF0182 PROTEIN SLL1060"/>
    <property type="match status" value="1"/>
</dbReference>
<dbReference type="PANTHER" id="PTHR39344:SF1">
    <property type="entry name" value="UPF0182 PROTEIN SLL1060"/>
    <property type="match status" value="1"/>
</dbReference>
<dbReference type="Pfam" id="PF03699">
    <property type="entry name" value="UPF0182"/>
    <property type="match status" value="1"/>
</dbReference>
<gene>
    <name type="ordered locus">BQ2027_MB0065</name>
</gene>
<evidence type="ECO:0000255" key="1">
    <source>
        <dbReference type="HAMAP-Rule" id="MF_01600"/>
    </source>
</evidence>
<evidence type="ECO:0000256" key="2">
    <source>
        <dbReference type="SAM" id="MobiDB-lite"/>
    </source>
</evidence>
<reference key="1">
    <citation type="journal article" date="2003" name="Proc. Natl. Acad. Sci. U.S.A.">
        <title>The complete genome sequence of Mycobacterium bovis.</title>
        <authorList>
            <person name="Garnier T."/>
            <person name="Eiglmeier K."/>
            <person name="Camus J.-C."/>
            <person name="Medina N."/>
            <person name="Mansoor H."/>
            <person name="Pryor M."/>
            <person name="Duthoy S."/>
            <person name="Grondin S."/>
            <person name="Lacroix C."/>
            <person name="Monsempe C."/>
            <person name="Simon S."/>
            <person name="Harris B."/>
            <person name="Atkin R."/>
            <person name="Doggett J."/>
            <person name="Mayes R."/>
            <person name="Keating L."/>
            <person name="Wheeler P.R."/>
            <person name="Parkhill J."/>
            <person name="Barrell B.G."/>
            <person name="Cole S.T."/>
            <person name="Gordon S.V."/>
            <person name="Hewinson R.G."/>
        </authorList>
    </citation>
    <scope>NUCLEOTIDE SEQUENCE [LARGE SCALE GENOMIC DNA]</scope>
    <source>
        <strain>ATCC BAA-935 / AF2122/97</strain>
    </source>
</reference>
<reference key="2">
    <citation type="journal article" date="2017" name="Genome Announc.">
        <title>Updated reference genome sequence and annotation of Mycobacterium bovis AF2122/97.</title>
        <authorList>
            <person name="Malone K.M."/>
            <person name="Farrell D."/>
            <person name="Stuber T.P."/>
            <person name="Schubert O.T."/>
            <person name="Aebersold R."/>
            <person name="Robbe-Austerman S."/>
            <person name="Gordon S.V."/>
        </authorList>
    </citation>
    <scope>NUCLEOTIDE SEQUENCE [LARGE SCALE GENOMIC DNA]</scope>
    <scope>GENOME REANNOTATION</scope>
    <source>
        <strain>ATCC BAA-935 / AF2122/97</strain>
    </source>
</reference>
<proteinExistence type="inferred from homology"/>
<keyword id="KW-1003">Cell membrane</keyword>
<keyword id="KW-0472">Membrane</keyword>
<keyword id="KW-1185">Reference proteome</keyword>
<keyword id="KW-0812">Transmembrane</keyword>
<keyword id="KW-1133">Transmembrane helix</keyword>
<feature type="chain" id="PRO_0000157720" description="UPF0182 protein Mb0065">
    <location>
        <begin position="1"/>
        <end position="979"/>
    </location>
</feature>
<feature type="transmembrane region" description="Helical" evidence="1">
    <location>
        <begin position="19"/>
        <end position="41"/>
    </location>
</feature>
<feature type="transmembrane region" description="Helical" evidence="1">
    <location>
        <begin position="63"/>
        <end position="85"/>
    </location>
</feature>
<feature type="transmembrane region" description="Helical" evidence="1">
    <location>
        <begin position="114"/>
        <end position="136"/>
    </location>
</feature>
<feature type="transmembrane region" description="Helical" evidence="1">
    <location>
        <begin position="174"/>
        <end position="196"/>
    </location>
</feature>
<feature type="transmembrane region" description="Helical" evidence="1">
    <location>
        <begin position="208"/>
        <end position="230"/>
    </location>
</feature>
<feature type="transmembrane region" description="Helical" evidence="1">
    <location>
        <begin position="261"/>
        <end position="280"/>
    </location>
</feature>
<feature type="transmembrane region" description="Helical" evidence="1">
    <location>
        <begin position="285"/>
        <end position="307"/>
    </location>
</feature>
<feature type="region of interest" description="Disordered" evidence="2">
    <location>
        <begin position="898"/>
        <end position="948"/>
    </location>
</feature>
<feature type="compositionally biased region" description="Low complexity" evidence="2">
    <location>
        <begin position="902"/>
        <end position="912"/>
    </location>
</feature>
<feature type="compositionally biased region" description="Pro residues" evidence="2">
    <location>
        <begin position="913"/>
        <end position="946"/>
    </location>
</feature>
<organism>
    <name type="scientific">Mycobacterium bovis (strain ATCC BAA-935 / AF2122/97)</name>
    <dbReference type="NCBI Taxonomy" id="233413"/>
    <lineage>
        <taxon>Bacteria</taxon>
        <taxon>Bacillati</taxon>
        <taxon>Actinomycetota</taxon>
        <taxon>Actinomycetes</taxon>
        <taxon>Mycobacteriales</taxon>
        <taxon>Mycobacteriaceae</taxon>
        <taxon>Mycobacterium</taxon>
        <taxon>Mycobacterium tuberculosis complex</taxon>
    </lineage>
</organism>
<name>Y065_MYCBO</name>
<sequence length="979" mass="107429">METGSPGKRPVLPKRARLLVTAGMGMLALLLFGPRLVDIYVDWLWFGEVGFRSVWITVLLTRLAIVAAVALVVAGIVLAALLLAYRSRPFFVPDEPQRDPVAPLRSAVMRRPRLFGWGIAVTLGVVCGLIASFDWVKVQLFVHGGTFGIVDPEFGYDIGFFVFDLPFYRSVLNWLFVAVVLAFLASLLTHYLFGGLRLTTGRGMLTQAARVQLAVFAGAVVLLKAVAYWLDRYELLSSGRKEPTFTGAGYTDIHAELPAKLVLVAIAVLCAVSFFTAIFLRDLRIPAMAAALLVLSAILVGGLWPLLMEQFSVRPNAADVERPYIQRNIEATREAYRIGGDWVQYRSYPGIGTKQPRDVPVDVTTIAKVRLLDPHILSRTFTQQQQLKNFFSFAEILDIDRYRIDGELQDYIVGVRELSPKSLTGNQTDWINKHIVYTHGNGFVAAPANRVNAAARDAENISDSNSGYPIYAVSDIASLGSGRQVIPVEQPRVYYGEVIAQADPDYAIVGGAPGSAPREYDTDTSKYTYTGAGGVSIGNWFNRTVFATKFAQHKFLFSREIGSESKVLIHRDPKERVQRVAPWLTTDDNPYPVVVNGRIVWIVDAYTTLDTYPYAQRSSLEGPVTSPTGIVRQGKQVSYVRNSVKATVDAYDGTVTLFQFDRDDPVLRTWMRAFPGTVKSEDQIPDELRAHFRYPEDLFEVQRSLLAKYHVDEPREFFTTNAFWSVPSDPTNDANATQPPFYVLVGDQQSAQPSFRLASAMVGYNREFLSAYISAHSDPANYGKLTVLELPTDTLTQGPQQIQNSMISDTRVASERTLLERSNRIHYGNLLSLPIADGGVLYVEPLYTERISTSPSSSTFPQLSRVLVSVREPRTEGGVRVGYAPTLAESLDQVFGPGTGRVATAPGGDAASAPPPGAGGPAPPQAVPPPRTTQPPAAPPRGPDVPPATVAELRETLADLRAVLDRLEKAIDAAETPGG</sequence>
<protein>
    <recommendedName>
        <fullName evidence="1">UPF0182 protein Mb0065</fullName>
    </recommendedName>
</protein>
<comment type="subcellular location">
    <subcellularLocation>
        <location evidence="1">Cell membrane</location>
        <topology evidence="1">Multi-pass membrane protein</topology>
    </subcellularLocation>
</comment>
<comment type="similarity">
    <text evidence="1">Belongs to the UPF0182 family.</text>
</comment>
<accession>Q7U2X8</accession>
<accession>A0A1R3XU74</accession>
<accession>X2BDX2</accession>